<keyword id="KW-0002">3D-structure</keyword>
<keyword id="KW-1015">Disulfide bond</keyword>
<keyword id="KW-0256">Endoplasmic reticulum</keyword>
<keyword id="KW-0325">Glycoprotein</keyword>
<keyword id="KW-0430">Lectin</keyword>
<keyword id="KW-0472">Membrane</keyword>
<keyword id="KW-1185">Reference proteome</keyword>
<keyword id="KW-0732">Signal</keyword>
<organism>
    <name type="scientific">Saccharomyces cerevisiae (strain ATCC 204508 / S288c)</name>
    <name type="common">Baker's yeast</name>
    <dbReference type="NCBI Taxonomy" id="559292"/>
    <lineage>
        <taxon>Eukaryota</taxon>
        <taxon>Fungi</taxon>
        <taxon>Dikarya</taxon>
        <taxon>Ascomycota</taxon>
        <taxon>Saccharomycotina</taxon>
        <taxon>Saccharomycetes</taxon>
        <taxon>Saccharomycetales</taxon>
        <taxon>Saccharomycetaceae</taxon>
        <taxon>Saccharomyces</taxon>
    </lineage>
</organism>
<sequence length="542" mass="61258">MQAKIIYALSAISALIPLGSSLLAPIEDPIVSNKYLISYIDEDDWSDRILQNQSVMNSGYIVNMGDDLECFIQNASTQLNDVLEDSNEHSNSEKTALLTKTLNQGVKTIFDKLNERCIFYQAGFWIYEYCPGIEFVQFHGRVNTKTGEIVNRDESLVYRLGKPKANVEEREFELLYDDVGYYISEIIGSGDICDVTGAERMVEIQYVCGGSNSGPSTIQWVRETKICVYEAQVTIPELCNLELLAKNEDQKNASPILCRMPAKSKIGSNSIDLITKYEPIFLGSGIYFLRPFNTDERDKLMVTDNAMSNWDEITETYYQKFGNAINKMLSLRLVSLPNGHILQPGDSCVWLAEVVDMKDRFQTTLSLNILNSQRAEIFFNKTFTFNEDNGNFLSYKIGDHGESTELGQITHSNKADINTAEIRSDEYLINTDNELFLRISKEIAEVKELLNEIVSPHEMEVIFENMRNQPNNDFELALMNKLKSSLNDDNKVEQINNARMDDDESTSHTTRDIGEAGSQTTGNTESEVTNVAAGVFIEHDEL</sequence>
<feature type="signal peptide" evidence="2">
    <location>
        <begin position="1"/>
        <end position="21"/>
    </location>
</feature>
<feature type="chain" id="PRO_0000042758" description="Protein OS-9 homolog">
    <location>
        <begin position="22"/>
        <end position="542"/>
    </location>
</feature>
<feature type="domain" description="MRH" evidence="3">
    <location>
        <begin position="115"/>
        <end position="241"/>
    </location>
</feature>
<feature type="region of interest" description="Disordered" evidence="5">
    <location>
        <begin position="497"/>
        <end position="528"/>
    </location>
</feature>
<feature type="short sequence motif" description="Prevents secretion from ER" evidence="4">
    <location>
        <begin position="539"/>
        <end position="542"/>
    </location>
</feature>
<feature type="compositionally biased region" description="Basic and acidic residues" evidence="5">
    <location>
        <begin position="505"/>
        <end position="514"/>
    </location>
</feature>
<feature type="compositionally biased region" description="Polar residues" evidence="5">
    <location>
        <begin position="517"/>
        <end position="528"/>
    </location>
</feature>
<feature type="binding site" evidence="1">
    <location>
        <position position="125"/>
    </location>
    <ligand>
        <name>a mannooligosaccharide derivative</name>
        <dbReference type="ChEBI" id="CHEBI:71274"/>
    </ligand>
</feature>
<feature type="binding site" evidence="1">
    <location>
        <position position="137"/>
    </location>
    <ligand>
        <name>a mannooligosaccharide derivative</name>
        <dbReference type="ChEBI" id="CHEBI:71274"/>
    </ligand>
</feature>
<feature type="binding site" evidence="1">
    <location>
        <position position="194"/>
    </location>
    <ligand>
        <name>a mannooligosaccharide derivative</name>
        <dbReference type="ChEBI" id="CHEBI:71274"/>
    </ligand>
</feature>
<feature type="binding site" evidence="1">
    <location>
        <position position="200"/>
    </location>
    <ligand>
        <name>a mannooligosaccharide derivative</name>
        <dbReference type="ChEBI" id="CHEBI:71274"/>
    </ligand>
</feature>
<feature type="binding site" evidence="1">
    <location>
        <position position="223"/>
    </location>
    <ligand>
        <name>a mannooligosaccharide derivative</name>
        <dbReference type="ChEBI" id="CHEBI:71274"/>
    </ligand>
</feature>
<feature type="binding site" evidence="1">
    <location>
        <position position="229"/>
    </location>
    <ligand>
        <name>a mannooligosaccharide derivative</name>
        <dbReference type="ChEBI" id="CHEBI:71274"/>
    </ligand>
</feature>
<feature type="glycosylation site" description="N-linked (GlcNAc...) asparagine" evidence="2">
    <location>
        <position position="52"/>
    </location>
</feature>
<feature type="glycosylation site" description="N-linked (GlcNAc...) asparagine" evidence="2">
    <location>
        <position position="74"/>
    </location>
</feature>
<feature type="glycosylation site" description="N-linked (GlcNAc...) asparagine" evidence="2">
    <location>
        <position position="380"/>
    </location>
</feature>
<feature type="disulfide bond" evidence="15 18">
    <location>
        <begin position="70"/>
        <end position="258"/>
    </location>
</feature>
<feature type="disulfide bond" evidence="15 18">
    <location>
        <begin position="117"/>
        <end position="130"/>
    </location>
</feature>
<feature type="disulfide bond" evidence="15 18">
    <location>
        <begin position="193"/>
        <end position="227"/>
    </location>
</feature>
<feature type="disulfide bond" evidence="15 18">
    <location>
        <begin position="208"/>
        <end position="239"/>
    </location>
</feature>
<feature type="mutagenesis site" description="Decrease of ER lumenal misfolded protein degradation." evidence="10">
    <original>Y</original>
    <variation>A</variation>
    <location>
        <position position="127"/>
    </location>
</feature>
<feature type="mutagenesis site" description="Decrease of ER lumenal misfolded protein degradation." evidence="10">
    <original>Q</original>
    <variation>E</variation>
    <location>
        <position position="137"/>
    </location>
</feature>
<feature type="mutagenesis site" description="Decrease of ER lumenal misfolded protein degradation." evidence="10">
    <original>H</original>
    <variation>A</variation>
    <location>
        <position position="139"/>
    </location>
</feature>
<feature type="mutagenesis site" description="Decrease of ER lumenal misfolded protein degradation. No effect on interaction with CDC48, HRD3, KAR2, UBX2, HRD1 or EMP47." evidence="8 10 11">
    <original>R</original>
    <variation>A</variation>
    <location>
        <position position="200"/>
    </location>
</feature>
<feature type="mutagenesis site" description="Decrease of ER lumenal misfolded protein degradation." evidence="8 10">
    <original>E</original>
    <variation>N</variation>
    <location>
        <position position="223"/>
    </location>
</feature>
<feature type="mutagenesis site" description="Decrease of ER lumenal misfolded protein degradation." evidence="8 10">
    <original>Y</original>
    <variation>A</variation>
    <variation>F</variation>
    <location>
        <position position="229"/>
    </location>
</feature>
<feature type="mutagenesis site" description="Abolishes dimerization." evidence="14">
    <original>N</original>
    <variation>A</variation>
    <location>
        <position position="380"/>
    </location>
</feature>
<feature type="mutagenesis site" description="Abolishes dimerization." evidence="14">
    <original>L</original>
    <variation>A</variation>
    <location>
        <position position="393"/>
    </location>
</feature>
<feature type="sequence conflict" description="In Ref. 2; CAA89086." evidence="16" ref="2">
    <original>P</original>
    <variation>L</variation>
    <location>
        <position position="25"/>
    </location>
</feature>
<feature type="strand" evidence="19">
    <location>
        <begin position="276"/>
        <end position="283"/>
    </location>
</feature>
<feature type="strand" evidence="19">
    <location>
        <begin position="286"/>
        <end position="293"/>
    </location>
</feature>
<feature type="strand" evidence="19">
    <location>
        <begin position="299"/>
        <end position="302"/>
    </location>
</feature>
<feature type="helix" evidence="19">
    <location>
        <begin position="305"/>
        <end position="307"/>
    </location>
</feature>
<feature type="strand" evidence="19">
    <location>
        <begin position="310"/>
        <end position="312"/>
    </location>
</feature>
<feature type="helix" evidence="19">
    <location>
        <begin position="315"/>
        <end position="330"/>
    </location>
</feature>
<feature type="strand" evidence="19">
    <location>
        <begin position="347"/>
        <end position="355"/>
    </location>
</feature>
<feature type="strand" evidence="19">
    <location>
        <begin position="361"/>
        <end position="369"/>
    </location>
</feature>
<feature type="strand" evidence="19">
    <location>
        <begin position="371"/>
        <end position="373"/>
    </location>
</feature>
<feature type="strand" evidence="19">
    <location>
        <begin position="375"/>
        <end position="380"/>
    </location>
</feature>
<feature type="strand" evidence="19">
    <location>
        <begin position="391"/>
        <end position="396"/>
    </location>
</feature>
<dbReference type="EMBL" id="X84162">
    <property type="protein sequence ID" value="CAA58973.1"/>
    <property type="molecule type" value="Genomic_DNA"/>
</dbReference>
<dbReference type="EMBL" id="Z74353">
    <property type="protein sequence ID" value="CAA98875.1"/>
    <property type="molecule type" value="Genomic_DNA"/>
</dbReference>
<dbReference type="EMBL" id="Z49209">
    <property type="protein sequence ID" value="CAA89086.1"/>
    <property type="molecule type" value="Genomic_DNA"/>
</dbReference>
<dbReference type="EMBL" id="BK006938">
    <property type="protein sequence ID" value="DAA11903.1"/>
    <property type="molecule type" value="Genomic_DNA"/>
</dbReference>
<dbReference type="PIR" id="S58837">
    <property type="entry name" value="S58837"/>
</dbReference>
<dbReference type="RefSeq" id="NP_010342.3">
    <property type="nucleotide sequence ID" value="NM_001180365.3"/>
</dbReference>
<dbReference type="PDB" id="2YMA">
    <property type="method" value="X-ray"/>
    <property type="resolution" value="2.54 A"/>
    <property type="chains" value="A/B=266-424"/>
</dbReference>
<dbReference type="PDB" id="6VK3">
    <property type="method" value="EM"/>
    <property type="resolution" value="3.70 A"/>
    <property type="chains" value="B=1-542"/>
</dbReference>
<dbReference type="PDBsum" id="2YMA"/>
<dbReference type="PDBsum" id="6VK3"/>
<dbReference type="EMDB" id="EMD-21224"/>
<dbReference type="SMR" id="Q99220"/>
<dbReference type="BioGRID" id="32110">
    <property type="interactions" value="137"/>
</dbReference>
<dbReference type="ComplexPortal" id="CPX-1280">
    <property type="entry name" value="Luminal surveillance complex"/>
</dbReference>
<dbReference type="ComplexPortal" id="CPX-3070">
    <property type="entry name" value="HRD1 E3 ubiquitin ligase complex"/>
</dbReference>
<dbReference type="FunCoup" id="Q99220">
    <property type="interactions" value="117"/>
</dbReference>
<dbReference type="IntAct" id="Q99220">
    <property type="interactions" value="13"/>
</dbReference>
<dbReference type="MINT" id="Q99220"/>
<dbReference type="STRING" id="4932.YDR057W"/>
<dbReference type="TCDB" id="3.A.16.1.2">
    <property type="family name" value="the endoplasmic reticular retrotranslocon (er-rt) family"/>
</dbReference>
<dbReference type="TCDB" id="8.A.67.1.5">
    <property type="family name" value="the os-9 quality control (erad) protein (os-9) family"/>
</dbReference>
<dbReference type="GlyCosmos" id="Q99220">
    <property type="glycosylation" value="3 sites, No reported glycans"/>
</dbReference>
<dbReference type="GlyGen" id="Q99220">
    <property type="glycosylation" value="3 sites"/>
</dbReference>
<dbReference type="iPTMnet" id="Q99220"/>
<dbReference type="PaxDb" id="4932-YDR057W"/>
<dbReference type="PeptideAtlas" id="Q99220"/>
<dbReference type="EnsemblFungi" id="YDR057W_mRNA">
    <property type="protein sequence ID" value="YDR057W"/>
    <property type="gene ID" value="YDR057W"/>
</dbReference>
<dbReference type="GeneID" id="851627"/>
<dbReference type="KEGG" id="sce:YDR057W"/>
<dbReference type="AGR" id="SGD:S000002464"/>
<dbReference type="SGD" id="S000002464">
    <property type="gene designation" value="YOS9"/>
</dbReference>
<dbReference type="VEuPathDB" id="FungiDB:YDR057W"/>
<dbReference type="eggNOG" id="KOG3394">
    <property type="taxonomic scope" value="Eukaryota"/>
</dbReference>
<dbReference type="HOGENOM" id="CLU_502681_0_0_1"/>
<dbReference type="InParanoid" id="Q99220"/>
<dbReference type="OMA" id="SPHEMEV"/>
<dbReference type="OrthoDB" id="448954at2759"/>
<dbReference type="BioCyc" id="YEAST:G3O-29666-MONOMER"/>
<dbReference type="BioGRID-ORCS" id="851627">
    <property type="hits" value="0 hits in 10 CRISPR screens"/>
</dbReference>
<dbReference type="EvolutionaryTrace" id="Q99220"/>
<dbReference type="PRO" id="PR:Q99220"/>
<dbReference type="Proteomes" id="UP000002311">
    <property type="component" value="Chromosome IV"/>
</dbReference>
<dbReference type="RNAct" id="Q99220">
    <property type="molecule type" value="protein"/>
</dbReference>
<dbReference type="GO" id="GO:0005783">
    <property type="term" value="C:endoplasmic reticulum"/>
    <property type="evidence" value="ECO:0007005"/>
    <property type="project" value="SGD"/>
</dbReference>
<dbReference type="GO" id="GO:0005788">
    <property type="term" value="C:endoplasmic reticulum lumen"/>
    <property type="evidence" value="ECO:0000314"/>
    <property type="project" value="SGD"/>
</dbReference>
<dbReference type="GO" id="GO:0005789">
    <property type="term" value="C:endoplasmic reticulum membrane"/>
    <property type="evidence" value="ECO:0000303"/>
    <property type="project" value="ComplexPortal"/>
</dbReference>
<dbReference type="GO" id="GO:0000836">
    <property type="term" value="C:Hrd1p ubiquitin ligase complex"/>
    <property type="evidence" value="ECO:0000353"/>
    <property type="project" value="ComplexPortal"/>
</dbReference>
<dbReference type="GO" id="GO:0000839">
    <property type="term" value="C:Hrd1p ubiquitin ligase ERAD-L complex"/>
    <property type="evidence" value="ECO:0000353"/>
    <property type="project" value="SGD"/>
</dbReference>
<dbReference type="GO" id="GO:0034099">
    <property type="term" value="C:luminal surveillance complex"/>
    <property type="evidence" value="ECO:0000314"/>
    <property type="project" value="SGD"/>
</dbReference>
<dbReference type="GO" id="GO:0042802">
    <property type="term" value="F:identical protein binding"/>
    <property type="evidence" value="ECO:0000353"/>
    <property type="project" value="UniProtKB"/>
</dbReference>
<dbReference type="GO" id="GO:0070492">
    <property type="term" value="F:oligosaccharide binding"/>
    <property type="evidence" value="ECO:0000314"/>
    <property type="project" value="SGD"/>
</dbReference>
<dbReference type="GO" id="GO:0002235">
    <property type="term" value="P:detection of unfolded protein"/>
    <property type="evidence" value="ECO:0000303"/>
    <property type="project" value="ComplexPortal"/>
</dbReference>
<dbReference type="GO" id="GO:0030968">
    <property type="term" value="P:endoplasmic reticulum unfolded protein response"/>
    <property type="evidence" value="ECO:0000315"/>
    <property type="project" value="SGD"/>
</dbReference>
<dbReference type="GO" id="GO:0036503">
    <property type="term" value="P:ERAD pathway"/>
    <property type="evidence" value="ECO:0000315"/>
    <property type="project" value="SGD"/>
</dbReference>
<dbReference type="GO" id="GO:0030970">
    <property type="term" value="P:retrograde protein transport, ER to cytosol"/>
    <property type="evidence" value="ECO:0000315"/>
    <property type="project" value="SGD"/>
</dbReference>
<dbReference type="GO" id="GO:0097466">
    <property type="term" value="P:ubiquitin-dependent glycoprotein ERAD pathway"/>
    <property type="evidence" value="ECO:0000315"/>
    <property type="project" value="SGD"/>
</dbReference>
<dbReference type="CDD" id="cd11745">
    <property type="entry name" value="Yos9_DD"/>
    <property type="match status" value="1"/>
</dbReference>
<dbReference type="FunFam" id="2.70.130.10:FF:000031">
    <property type="entry name" value="Yos9p"/>
    <property type="match status" value="1"/>
</dbReference>
<dbReference type="Gene3D" id="3.10.310.60">
    <property type="match status" value="1"/>
</dbReference>
<dbReference type="Gene3D" id="2.70.130.10">
    <property type="entry name" value="Mannose-6-phosphate receptor binding domain"/>
    <property type="match status" value="1"/>
</dbReference>
<dbReference type="InterPro" id="IPR009011">
    <property type="entry name" value="Man6P_isomerase_rcpt-bd_dom_sf"/>
</dbReference>
<dbReference type="InterPro" id="IPR044865">
    <property type="entry name" value="MRH_dom"/>
</dbReference>
<dbReference type="InterPro" id="IPR045149">
    <property type="entry name" value="OS-9-like"/>
</dbReference>
<dbReference type="InterPro" id="IPR012913">
    <property type="entry name" value="OS9-like_dom"/>
</dbReference>
<dbReference type="InterPro" id="IPR041039">
    <property type="entry name" value="Yos9_DD"/>
</dbReference>
<dbReference type="PANTHER" id="PTHR15414:SF0">
    <property type="entry name" value="ENDOPLASMIC RETICULUM LECTIN 1"/>
    <property type="match status" value="1"/>
</dbReference>
<dbReference type="PANTHER" id="PTHR15414">
    <property type="entry name" value="OS-9-RELATED"/>
    <property type="match status" value="1"/>
</dbReference>
<dbReference type="Pfam" id="PF07915">
    <property type="entry name" value="PRKCSH"/>
    <property type="match status" value="1"/>
</dbReference>
<dbReference type="Pfam" id="PF17880">
    <property type="entry name" value="Yos9_DD"/>
    <property type="match status" value="1"/>
</dbReference>
<dbReference type="PROSITE" id="PS00014">
    <property type="entry name" value="ER_TARGET"/>
    <property type="match status" value="1"/>
</dbReference>
<dbReference type="PROSITE" id="PS51914">
    <property type="entry name" value="MRH"/>
    <property type="match status" value="1"/>
</dbReference>
<proteinExistence type="evidence at protein level"/>
<comment type="function">
    <text evidence="6 7 8 9 10 11 15">Lectin involved in the quality control of the secretory pathway. As a member of the endoplasmic reticulum-associated degradation lumenal (ERAD-L) surveillance system, targets misfolded endoplasmic reticulum lumenal glycoproteins for degradation. The recognition of targets is N-glycan specific. Functions in recruiting misfolded protein substrates in conjunction with HRD3 (PubMed:32327568).</text>
</comment>
<comment type="subunit">
    <text evidence="6 8 9 10 11 12 14 15">Homodimer (PubMed:22262864). Component of the HRD1 ubiquitin ligase complex which contains the E3 ligase HRD1, its cofactors HRD3, USA1 and DER1, substrate recruiting factor YOS9 and CDC48-binding protein UBX2 (PubMed:16873065, PubMed:16873066). Within the complex, interacts (via N-terminus) with HRD3 (PubMed:22262864). In ERAD-L, HRD3 and YOS9 jointly bind misfolded glycoproteins in the endoplasmic reticulum (ER) lumen (PubMed:32327568). Movement of ERAD-L substrates through the ER membrane is facilitated by HRD1 and DER1 which have lateral gates facing each other and which distort the membrane region between the lateral gates, making it much thinner than a normal phospholipid bilayer (PubMed:32327568). Substrates insert into the membrane as a hairpin loop with one strand interacting with DER1 and the other with HRD1 (PubMed:32327568). The HRD1 complex interacts with the heterotrimeric CDC48-NPL4-UFD1 ATPase complex which is recruited by UBX2 via its interaction with CDC48 and which moves ubiquitinated substrates to the cytosol for targeting to the proteasome (PubMed:16873065, PubMed:16873066). Interacts with KAR2 and EMP47 (PubMed:16873065). Interacts with misfolded ER lumenal proteins like PCR1 (PubMed:16168370, PubMed:16168371, PubMed:16168372). Interacts with the GPI-anchored proteins GAS1 and MKC7 (PubMed:12077121).</text>
</comment>
<comment type="interaction">
    <interactant intactId="EBI-34938">
        <id>Q99220</id>
    </interactant>
    <interactant intactId="EBI-37613">
        <id>Q08109</id>
        <label>HRD1</label>
    </interactant>
    <organismsDiffer>false</organismsDiffer>
    <experiments>7</experiments>
</comment>
<comment type="interaction">
    <interactant intactId="EBI-34938">
        <id>Q99220</id>
    </interactant>
    <interactant intactId="EBI-31647">
        <id>Q05787</id>
        <label>HRD3</label>
    </interactant>
    <organismsDiffer>false</organismsDiffer>
    <experiments>9</experiments>
</comment>
<comment type="interaction">
    <interactant intactId="EBI-34938">
        <id>Q99220</id>
    </interactant>
    <interactant intactId="EBI-7876">
        <id>P16474</id>
        <label>KAR2</label>
    </interactant>
    <organismsDiffer>false</organismsDiffer>
    <experiments>2</experiments>
</comment>
<comment type="interaction">
    <interactant intactId="EBI-34938">
        <id>Q99220</id>
    </interactant>
    <interactant intactId="EBI-4153">
        <id>P00729</id>
        <label>PRC1</label>
    </interactant>
    <organismsDiffer>false</organismsDiffer>
    <experiments>2</experiments>
</comment>
<comment type="interaction">
    <interactant intactId="EBI-34938">
        <id>Q99220</id>
    </interactant>
    <interactant intactId="EBI-27730">
        <id>Q04228</id>
        <label>UBX2</label>
    </interactant>
    <organismsDiffer>false</organismsDiffer>
    <experiments>3</experiments>
</comment>
<comment type="subcellular location">
    <subcellularLocation>
        <location evidence="4 6 9">Endoplasmic reticulum membrane</location>
        <topology evidence="6 9">Peripheral membrane protein</topology>
        <orientation evidence="6 9">Lumenal side</orientation>
    </subcellularLocation>
</comment>
<comment type="domain">
    <text evidence="8 10">The MRH (mannose 6-phosphate receptor homology) domain is required for the ERAD-L activity.</text>
</comment>
<comment type="disruption phenotype">
    <text evidence="11 13">Interaction of substrate with HRD1 is reduced; in YOS9 and USA1 double mutants this interaction is completely abolished. Interaction of substrate (either glycosylated or non-glycosylated) with HRD3 is not affected.</text>
</comment>
<comment type="similarity">
    <text evidence="16">Belongs to the OS-9 family.</text>
</comment>
<accession>Q99220</accession>
<accession>D6VS43</accession>
<accession>Q04313</accession>
<evidence type="ECO:0000250" key="1">
    <source>
        <dbReference type="UniProtKB" id="Q13438"/>
    </source>
</evidence>
<evidence type="ECO:0000255" key="2"/>
<evidence type="ECO:0000255" key="3">
    <source>
        <dbReference type="PROSITE-ProRule" id="PRU01262"/>
    </source>
</evidence>
<evidence type="ECO:0000255" key="4">
    <source>
        <dbReference type="PROSITE-ProRule" id="PRU10138"/>
    </source>
</evidence>
<evidence type="ECO:0000256" key="5">
    <source>
        <dbReference type="SAM" id="MobiDB-lite"/>
    </source>
</evidence>
<evidence type="ECO:0000269" key="6">
    <source>
    </source>
</evidence>
<evidence type="ECO:0000269" key="7">
    <source>
    </source>
</evidence>
<evidence type="ECO:0000269" key="8">
    <source>
    </source>
</evidence>
<evidence type="ECO:0000269" key="9">
    <source>
    </source>
</evidence>
<evidence type="ECO:0000269" key="10">
    <source>
    </source>
</evidence>
<evidence type="ECO:0000269" key="11">
    <source>
    </source>
</evidence>
<evidence type="ECO:0000269" key="12">
    <source>
    </source>
</evidence>
<evidence type="ECO:0000269" key="13">
    <source>
    </source>
</evidence>
<evidence type="ECO:0000269" key="14">
    <source>
    </source>
</evidence>
<evidence type="ECO:0000269" key="15">
    <source>
    </source>
</evidence>
<evidence type="ECO:0000305" key="16"/>
<evidence type="ECO:0007744" key="17">
    <source>
        <dbReference type="PDB" id="2YMA"/>
    </source>
</evidence>
<evidence type="ECO:0007744" key="18">
    <source>
        <dbReference type="PDB" id="6VK3"/>
    </source>
</evidence>
<evidence type="ECO:0007829" key="19">
    <source>
        <dbReference type="PDB" id="2YMA"/>
    </source>
</evidence>
<protein>
    <recommendedName>
        <fullName>Protein OS-9 homolog</fullName>
    </recommendedName>
</protein>
<gene>
    <name type="primary">YOS9</name>
    <name type="ordered locus">YDR057W</name>
    <name type="ORF">D4222</name>
</gene>
<name>OS9_YEAST</name>
<reference key="1">
    <citation type="journal article" date="1996" name="Yeast">
        <title>Nucleotide sequence analysis of a 32,500 bp region of the right arm of Saccharomyces cerevisiae chromosome IV.</title>
        <authorList>
            <person name="Brandt P."/>
            <person name="Ramlow S."/>
            <person name="Otto B."/>
            <person name="Bloecker H."/>
        </authorList>
    </citation>
    <scope>NUCLEOTIDE SEQUENCE [GENOMIC DNA]</scope>
</reference>
<reference key="2">
    <citation type="journal article" date="1997" name="Nature">
        <title>The nucleotide sequence of Saccharomyces cerevisiae chromosome IV.</title>
        <authorList>
            <person name="Jacq C."/>
            <person name="Alt-Moerbe J."/>
            <person name="Andre B."/>
            <person name="Arnold W."/>
            <person name="Bahr A."/>
            <person name="Ballesta J.P.G."/>
            <person name="Bargues M."/>
            <person name="Baron L."/>
            <person name="Becker A."/>
            <person name="Biteau N."/>
            <person name="Bloecker H."/>
            <person name="Blugeon C."/>
            <person name="Boskovic J."/>
            <person name="Brandt P."/>
            <person name="Brueckner M."/>
            <person name="Buitrago M.J."/>
            <person name="Coster F."/>
            <person name="Delaveau T."/>
            <person name="del Rey F."/>
            <person name="Dujon B."/>
            <person name="Eide L.G."/>
            <person name="Garcia-Cantalejo J.M."/>
            <person name="Goffeau A."/>
            <person name="Gomez-Peris A."/>
            <person name="Granotier C."/>
            <person name="Hanemann V."/>
            <person name="Hankeln T."/>
            <person name="Hoheisel J.D."/>
            <person name="Jaeger W."/>
            <person name="Jimenez A."/>
            <person name="Jonniaux J.-L."/>
            <person name="Kraemer C."/>
            <person name="Kuester H."/>
            <person name="Laamanen P."/>
            <person name="Legros Y."/>
            <person name="Louis E.J."/>
            <person name="Moeller-Rieker S."/>
            <person name="Monnet A."/>
            <person name="Moro M."/>
            <person name="Mueller-Auer S."/>
            <person name="Nussbaumer B."/>
            <person name="Paricio N."/>
            <person name="Paulin L."/>
            <person name="Perea J."/>
            <person name="Perez-Alonso M."/>
            <person name="Perez-Ortin J.E."/>
            <person name="Pohl T.M."/>
            <person name="Prydz H."/>
            <person name="Purnelle B."/>
            <person name="Rasmussen S.W."/>
            <person name="Remacha M.A."/>
            <person name="Revuelta J.L."/>
            <person name="Rieger M."/>
            <person name="Salom D."/>
            <person name="Saluz H.P."/>
            <person name="Saiz J.E."/>
            <person name="Saren A.-M."/>
            <person name="Schaefer M."/>
            <person name="Scharfe M."/>
            <person name="Schmidt E.R."/>
            <person name="Schneider C."/>
            <person name="Scholler P."/>
            <person name="Schwarz S."/>
            <person name="Soler-Mira A."/>
            <person name="Urrestarazu L.A."/>
            <person name="Verhasselt P."/>
            <person name="Vissers S."/>
            <person name="Voet M."/>
            <person name="Volckaert G."/>
            <person name="Wagner G."/>
            <person name="Wambutt R."/>
            <person name="Wedler E."/>
            <person name="Wedler H."/>
            <person name="Woelfl S."/>
            <person name="Harris D.E."/>
            <person name="Bowman S."/>
            <person name="Brown D."/>
            <person name="Churcher C.M."/>
            <person name="Connor R."/>
            <person name="Dedman K."/>
            <person name="Gentles S."/>
            <person name="Hamlin N."/>
            <person name="Hunt S."/>
            <person name="Jones L."/>
            <person name="McDonald S."/>
            <person name="Murphy L.D."/>
            <person name="Niblett D."/>
            <person name="Odell C."/>
            <person name="Oliver K."/>
            <person name="Rajandream M.A."/>
            <person name="Richards C."/>
            <person name="Shore L."/>
            <person name="Walsh S.V."/>
            <person name="Barrell B.G."/>
            <person name="Dietrich F.S."/>
            <person name="Mulligan J.T."/>
            <person name="Allen E."/>
            <person name="Araujo R."/>
            <person name="Aviles E."/>
            <person name="Berno A."/>
            <person name="Carpenter J."/>
            <person name="Chen E."/>
            <person name="Cherry J.M."/>
            <person name="Chung E."/>
            <person name="Duncan M."/>
            <person name="Hunicke-Smith S."/>
            <person name="Hyman R.W."/>
            <person name="Komp C."/>
            <person name="Lashkari D."/>
            <person name="Lew H."/>
            <person name="Lin D."/>
            <person name="Mosedale D."/>
            <person name="Nakahara K."/>
            <person name="Namath A."/>
            <person name="Oefner P."/>
            <person name="Oh C."/>
            <person name="Petel F.X."/>
            <person name="Roberts D."/>
            <person name="Schramm S."/>
            <person name="Schroeder M."/>
            <person name="Shogren T."/>
            <person name="Shroff N."/>
            <person name="Winant A."/>
            <person name="Yelton M.A."/>
            <person name="Botstein D."/>
            <person name="Davis R.W."/>
            <person name="Johnston M."/>
            <person name="Andrews S."/>
            <person name="Brinkman R."/>
            <person name="Cooper J."/>
            <person name="Ding H."/>
            <person name="Du Z."/>
            <person name="Favello A."/>
            <person name="Fulton L."/>
            <person name="Gattung S."/>
            <person name="Greco T."/>
            <person name="Hallsworth K."/>
            <person name="Hawkins J."/>
            <person name="Hillier L.W."/>
            <person name="Jier M."/>
            <person name="Johnson D."/>
            <person name="Johnston L."/>
            <person name="Kirsten J."/>
            <person name="Kucaba T."/>
            <person name="Langston Y."/>
            <person name="Latreille P."/>
            <person name="Le T."/>
            <person name="Mardis E."/>
            <person name="Menezes S."/>
            <person name="Miller N."/>
            <person name="Nhan M."/>
            <person name="Pauley A."/>
            <person name="Peluso D."/>
            <person name="Rifkin L."/>
            <person name="Riles L."/>
            <person name="Taich A."/>
            <person name="Trevaskis E."/>
            <person name="Vignati D."/>
            <person name="Wilcox L."/>
            <person name="Wohldman P."/>
            <person name="Vaudin M."/>
            <person name="Wilson R."/>
            <person name="Waterston R."/>
            <person name="Albermann K."/>
            <person name="Hani J."/>
            <person name="Heumann K."/>
            <person name="Kleine K."/>
            <person name="Mewes H.-W."/>
            <person name="Zollner A."/>
            <person name="Zaccaria P."/>
        </authorList>
    </citation>
    <scope>NUCLEOTIDE SEQUENCE [LARGE SCALE GENOMIC DNA]</scope>
    <source>
        <strain>ATCC 204508 / S288c</strain>
    </source>
</reference>
<reference key="3">
    <citation type="journal article" date="2014" name="G3 (Bethesda)">
        <title>The reference genome sequence of Saccharomyces cerevisiae: Then and now.</title>
        <authorList>
            <person name="Engel S.R."/>
            <person name="Dietrich F.S."/>
            <person name="Fisk D.G."/>
            <person name="Binkley G."/>
            <person name="Balakrishnan R."/>
            <person name="Costanzo M.C."/>
            <person name="Dwight S.S."/>
            <person name="Hitz B.C."/>
            <person name="Karra K."/>
            <person name="Nash R.S."/>
            <person name="Weng S."/>
            <person name="Wong E.D."/>
            <person name="Lloyd P."/>
            <person name="Skrzypek M.S."/>
            <person name="Miyasato S.R."/>
            <person name="Simison M."/>
            <person name="Cherry J.M."/>
        </authorList>
    </citation>
    <scope>GENOME REANNOTATION</scope>
    <source>
        <strain>ATCC 204508 / S288c</strain>
    </source>
</reference>
<reference key="4">
    <citation type="journal article" date="2002" name="J. Biol. Chem.">
        <title>YOS9, the putative yeast homolog of a gene amplified in osteosarcomas, is involved in the endoplasmic reticulum (ER)-Golgi transport of GPI-anchored proteins.</title>
        <authorList>
            <person name="Friedmann E."/>
            <person name="Salzberg Y."/>
            <person name="Weinberger A."/>
            <person name="Shaltiel S."/>
            <person name="Gerst J.E."/>
        </authorList>
    </citation>
    <scope>SUBCELLULAR LOCATION</scope>
    <scope>FUNCTION</scope>
    <scope>INTERACTION WITH GAS1 AND MKC7</scope>
</reference>
<reference key="5">
    <citation type="journal article" date="2004" name="FEBS Lett.">
        <title>A genome-wide screen identifies Yos9p as essential for ER-associated degradation of glycoproteins.</title>
        <authorList>
            <person name="Buschhorn B.A."/>
            <person name="Kostova Z."/>
            <person name="Medicherla B."/>
            <person name="Wolf D.H."/>
        </authorList>
    </citation>
    <scope>FUNCTION</scope>
</reference>
<reference key="6">
    <citation type="journal article" date="2005" name="Mol. Cell">
        <title>Exploration of the topological requirements of ERAD identifies Yos9p as a lectin sensor of misfolded glycoproteins in the ER lumen.</title>
        <authorList>
            <person name="Bhamidipati A."/>
            <person name="Denic V."/>
            <person name="Quan E.M."/>
            <person name="Weissman J.S."/>
        </authorList>
    </citation>
    <scope>FUNCTION</scope>
    <scope>DOMAIN</scope>
    <scope>INTERACTION WITH MISFOLDED PRC1</scope>
    <scope>MUTAGENESIS OF ARG-200; GLU-223 AND TYR-229</scope>
</reference>
<reference key="7">
    <citation type="journal article" date="2005" name="Mol. Cell">
        <title>Yos9p detects and targets misfolded glycoproteins for ER-associated degradation.</title>
        <authorList>
            <person name="Kim W."/>
            <person name="Spear E.D."/>
            <person name="Ng D.T.W."/>
        </authorList>
    </citation>
    <scope>FUNCTION</scope>
    <scope>SUBCELLULAR LOCATION</scope>
    <scope>INTERACTION WITH MISFOLDED PRC1</scope>
</reference>
<reference key="8">
    <citation type="journal article" date="2005" name="Mol. Cell">
        <title>Yos9 protein is essential for degradation of misfolded glycoproteins and may function as lectin in ERAD.</title>
        <authorList>
            <person name="Szathmary R."/>
            <person name="Bielmann R."/>
            <person name="Nita-Lazar M."/>
            <person name="Burda P."/>
            <person name="Jakob C.A."/>
        </authorList>
    </citation>
    <scope>FUNCTION</scope>
    <scope>DOMAIN</scope>
    <scope>INTERACTION WITH MISFOLDED PRC1</scope>
    <scope>MUTAGENESIS OF TYR-127; GLN-137; HIS-139; ARG-200; GLU-223 AND TYR-229</scope>
</reference>
<reference key="9">
    <citation type="journal article" date="2006" name="Cell">
        <title>A luminal surveillance complex that selects misfolded glycoproteins for ER-associated degradation.</title>
        <authorList>
            <person name="Denic V."/>
            <person name="Quan E.M."/>
            <person name="Weissman J.S."/>
        </authorList>
    </citation>
    <scope>FUNCTION</scope>
    <scope>IDENTIFICATION IN THE HRD1 COMPLEX</scope>
    <scope>INTERACTION WITH KAR2 AND EMP47</scope>
    <scope>DISRUPTION PHENOTYPE</scope>
    <scope>MUTAGENESIS OF ARG-200</scope>
</reference>
<reference key="10">
    <citation type="journal article" date="2006" name="Cell">
        <title>Distinct ubiquitin-ligase complexes define convergent pathways for the degradation of ER proteins.</title>
        <authorList>
            <person name="Carvalho P."/>
            <person name="Goder V."/>
            <person name="Rapoport T.A."/>
        </authorList>
    </citation>
    <scope>IDENTIFICATION IN THE HRD1 COMPLEX</scope>
</reference>
<reference key="11">
    <citation type="journal article" date="2010" name="Cell">
        <title>Retrotranslocation of a misfolded luminal ER protein by the ubiquitin-ligase Hrd1p.</title>
        <authorList>
            <person name="Carvalho P."/>
            <person name="Stanley A.M."/>
            <person name="Rapoport T.A."/>
        </authorList>
    </citation>
    <scope>DISRUPTION PHENOTYPE</scope>
</reference>
<reference evidence="17" key="12">
    <citation type="journal article" date="2012" name="J. Biol. Chem.">
        <title>Structural and biochemical basis of Yos9 protein dimerization and possible contribution to self-association of 3-hydroxy-3-methylglutaryl-coenzyme A reductase degradation ubiquitin-ligase complex.</title>
        <authorList>
            <person name="Hanna J."/>
            <person name="Schuetz A."/>
            <person name="Zimmermann F."/>
            <person name="Behlke J."/>
            <person name="Sommer T."/>
            <person name="Heinemann U."/>
        </authorList>
    </citation>
    <scope>X-RAY CRYSTALLOGRAPHY (2.54 ANGSTROMS) OF 266-424</scope>
    <scope>SUBUNIT</scope>
    <scope>INTERACTION WITH HRD3</scope>
    <scope>MUTAGENESIS OF ASN-380 AND LEU-393</scope>
</reference>
<reference evidence="18" key="13">
    <citation type="journal article" date="2020" name="Science">
        <title>Structural basis of ER-associated protein degradation mediated by the Hrd1 ubiquitin ligase complex.</title>
        <authorList>
            <person name="Wu X."/>
            <person name="Siggel M."/>
            <person name="Ovchinnikov S."/>
            <person name="Mi W."/>
            <person name="Svetlov V."/>
            <person name="Nudler E."/>
            <person name="Liao M."/>
            <person name="Hummer G."/>
            <person name="Rapoport T.A."/>
        </authorList>
    </citation>
    <scope>STRUCTURE BY ELECTRON MICROSCOPY (3.70 ANGSTROMS) IN COMPLEX WITH HRD3</scope>
    <scope>FUNCTION</scope>
    <scope>SUBUNIT</scope>
    <scope>DISULFIDE BONDS</scope>
</reference>